<keyword id="KW-0001">2Fe-2S</keyword>
<keyword id="KW-0028">Amino-acid biosynthesis</keyword>
<keyword id="KW-0100">Branched-chain amino acid biosynthesis</keyword>
<keyword id="KW-0408">Iron</keyword>
<keyword id="KW-0411">Iron-sulfur</keyword>
<keyword id="KW-0456">Lyase</keyword>
<keyword id="KW-0460">Magnesium</keyword>
<keyword id="KW-0479">Metal-binding</keyword>
<evidence type="ECO:0000255" key="1">
    <source>
        <dbReference type="HAMAP-Rule" id="MF_00012"/>
    </source>
</evidence>
<gene>
    <name evidence="1" type="primary">ilvD</name>
    <name type="ordered locus">SeD_A4294</name>
</gene>
<dbReference type="EC" id="4.2.1.9" evidence="1"/>
<dbReference type="EMBL" id="CP001144">
    <property type="protein sequence ID" value="ACH75398.1"/>
    <property type="molecule type" value="Genomic_DNA"/>
</dbReference>
<dbReference type="RefSeq" id="WP_001127431.1">
    <property type="nucleotide sequence ID" value="NC_011205.1"/>
</dbReference>
<dbReference type="SMR" id="B5FN65"/>
<dbReference type="KEGG" id="sed:SeD_A4294"/>
<dbReference type="HOGENOM" id="CLU_014271_4_2_6"/>
<dbReference type="UniPathway" id="UPA00047">
    <property type="reaction ID" value="UER00057"/>
</dbReference>
<dbReference type="UniPathway" id="UPA00049">
    <property type="reaction ID" value="UER00061"/>
</dbReference>
<dbReference type="Proteomes" id="UP000008322">
    <property type="component" value="Chromosome"/>
</dbReference>
<dbReference type="GO" id="GO:0005829">
    <property type="term" value="C:cytosol"/>
    <property type="evidence" value="ECO:0007669"/>
    <property type="project" value="TreeGrafter"/>
</dbReference>
<dbReference type="GO" id="GO:0051537">
    <property type="term" value="F:2 iron, 2 sulfur cluster binding"/>
    <property type="evidence" value="ECO:0007669"/>
    <property type="project" value="UniProtKB-UniRule"/>
</dbReference>
<dbReference type="GO" id="GO:0004160">
    <property type="term" value="F:dihydroxy-acid dehydratase activity"/>
    <property type="evidence" value="ECO:0007669"/>
    <property type="project" value="UniProtKB-UniRule"/>
</dbReference>
<dbReference type="GO" id="GO:0000287">
    <property type="term" value="F:magnesium ion binding"/>
    <property type="evidence" value="ECO:0007669"/>
    <property type="project" value="UniProtKB-UniRule"/>
</dbReference>
<dbReference type="GO" id="GO:0009097">
    <property type="term" value="P:isoleucine biosynthetic process"/>
    <property type="evidence" value="ECO:0007669"/>
    <property type="project" value="UniProtKB-UniRule"/>
</dbReference>
<dbReference type="GO" id="GO:0009099">
    <property type="term" value="P:L-valine biosynthetic process"/>
    <property type="evidence" value="ECO:0007669"/>
    <property type="project" value="UniProtKB-UniRule"/>
</dbReference>
<dbReference type="FunFam" id="3.50.30.80:FF:000001">
    <property type="entry name" value="Dihydroxy-acid dehydratase"/>
    <property type="match status" value="1"/>
</dbReference>
<dbReference type="Gene3D" id="3.50.30.80">
    <property type="entry name" value="IlvD/EDD C-terminal domain-like"/>
    <property type="match status" value="1"/>
</dbReference>
<dbReference type="HAMAP" id="MF_00012">
    <property type="entry name" value="IlvD"/>
    <property type="match status" value="1"/>
</dbReference>
<dbReference type="InterPro" id="IPR042096">
    <property type="entry name" value="Dihydro-acid_dehy_C"/>
</dbReference>
<dbReference type="InterPro" id="IPR004404">
    <property type="entry name" value="DihydroxyA_deHydtase"/>
</dbReference>
<dbReference type="InterPro" id="IPR020558">
    <property type="entry name" value="DiOHA_6PGluconate_deHydtase_CS"/>
</dbReference>
<dbReference type="InterPro" id="IPR056740">
    <property type="entry name" value="ILV_EDD_C"/>
</dbReference>
<dbReference type="InterPro" id="IPR000581">
    <property type="entry name" value="ILV_EDD_N"/>
</dbReference>
<dbReference type="InterPro" id="IPR037237">
    <property type="entry name" value="IlvD/EDD_N"/>
</dbReference>
<dbReference type="NCBIfam" id="TIGR00110">
    <property type="entry name" value="ilvD"/>
    <property type="match status" value="1"/>
</dbReference>
<dbReference type="NCBIfam" id="NF009103">
    <property type="entry name" value="PRK12448.1"/>
    <property type="match status" value="1"/>
</dbReference>
<dbReference type="PANTHER" id="PTHR43661">
    <property type="entry name" value="D-XYLONATE DEHYDRATASE"/>
    <property type="match status" value="1"/>
</dbReference>
<dbReference type="PANTHER" id="PTHR43661:SF3">
    <property type="entry name" value="D-XYLONATE DEHYDRATASE YAGF-RELATED"/>
    <property type="match status" value="1"/>
</dbReference>
<dbReference type="Pfam" id="PF24877">
    <property type="entry name" value="ILV_EDD_C"/>
    <property type="match status" value="1"/>
</dbReference>
<dbReference type="Pfam" id="PF00920">
    <property type="entry name" value="ILVD_EDD_N"/>
    <property type="match status" value="1"/>
</dbReference>
<dbReference type="SUPFAM" id="SSF143975">
    <property type="entry name" value="IlvD/EDD N-terminal domain-like"/>
    <property type="match status" value="1"/>
</dbReference>
<dbReference type="SUPFAM" id="SSF52016">
    <property type="entry name" value="LeuD/IlvD-like"/>
    <property type="match status" value="1"/>
</dbReference>
<dbReference type="PROSITE" id="PS00886">
    <property type="entry name" value="ILVD_EDD_1"/>
    <property type="match status" value="1"/>
</dbReference>
<dbReference type="PROSITE" id="PS00887">
    <property type="entry name" value="ILVD_EDD_2"/>
    <property type="match status" value="1"/>
</dbReference>
<protein>
    <recommendedName>
        <fullName evidence="1">Dihydroxy-acid dehydratase</fullName>
        <shortName evidence="1">DAD</shortName>
        <ecNumber evidence="1">4.2.1.9</ecNumber>
    </recommendedName>
</protein>
<name>ILVD_SALDC</name>
<comment type="function">
    <text evidence="1">Functions in the biosynthesis of branched-chain amino acids. Catalyzes the dehydration of (2R,3R)-2,3-dihydroxy-3-methylpentanoate (2,3-dihydroxy-3-methylvalerate) into 2-oxo-3-methylpentanoate (2-oxo-3-methylvalerate) and of (2R)-2,3-dihydroxy-3-methylbutanoate (2,3-dihydroxyisovalerate) into 2-oxo-3-methylbutanoate (2-oxoisovalerate), the penultimate precursor to L-isoleucine and L-valine, respectively.</text>
</comment>
<comment type="catalytic activity">
    <reaction evidence="1">
        <text>(2R)-2,3-dihydroxy-3-methylbutanoate = 3-methyl-2-oxobutanoate + H2O</text>
        <dbReference type="Rhea" id="RHEA:24809"/>
        <dbReference type="ChEBI" id="CHEBI:11851"/>
        <dbReference type="ChEBI" id="CHEBI:15377"/>
        <dbReference type="ChEBI" id="CHEBI:49072"/>
        <dbReference type="EC" id="4.2.1.9"/>
    </reaction>
    <physiologicalReaction direction="left-to-right" evidence="1">
        <dbReference type="Rhea" id="RHEA:24810"/>
    </physiologicalReaction>
</comment>
<comment type="catalytic activity">
    <reaction evidence="1">
        <text>(2R,3R)-2,3-dihydroxy-3-methylpentanoate = (S)-3-methyl-2-oxopentanoate + H2O</text>
        <dbReference type="Rhea" id="RHEA:27694"/>
        <dbReference type="ChEBI" id="CHEBI:15377"/>
        <dbReference type="ChEBI" id="CHEBI:35146"/>
        <dbReference type="ChEBI" id="CHEBI:49258"/>
        <dbReference type="EC" id="4.2.1.9"/>
    </reaction>
    <physiologicalReaction direction="left-to-right" evidence="1">
        <dbReference type="Rhea" id="RHEA:27695"/>
    </physiologicalReaction>
</comment>
<comment type="cofactor">
    <cofactor evidence="1">
        <name>[2Fe-2S] cluster</name>
        <dbReference type="ChEBI" id="CHEBI:190135"/>
    </cofactor>
    <text evidence="1">Binds 1 [2Fe-2S] cluster per subunit. This cluster acts as a Lewis acid cofactor.</text>
</comment>
<comment type="cofactor">
    <cofactor evidence="1">
        <name>Mg(2+)</name>
        <dbReference type="ChEBI" id="CHEBI:18420"/>
    </cofactor>
</comment>
<comment type="pathway">
    <text evidence="1">Amino-acid biosynthesis; L-isoleucine biosynthesis; L-isoleucine from 2-oxobutanoate: step 3/4.</text>
</comment>
<comment type="pathway">
    <text evidence="1">Amino-acid biosynthesis; L-valine biosynthesis; L-valine from pyruvate: step 3/4.</text>
</comment>
<comment type="subunit">
    <text evidence="1">Homodimer.</text>
</comment>
<comment type="similarity">
    <text evidence="1">Belongs to the IlvD/Edd family.</text>
</comment>
<reference key="1">
    <citation type="journal article" date="2011" name="J. Bacteriol.">
        <title>Comparative genomics of 28 Salmonella enterica isolates: evidence for CRISPR-mediated adaptive sublineage evolution.</title>
        <authorList>
            <person name="Fricke W.F."/>
            <person name="Mammel M.K."/>
            <person name="McDermott P.F."/>
            <person name="Tartera C."/>
            <person name="White D.G."/>
            <person name="Leclerc J.E."/>
            <person name="Ravel J."/>
            <person name="Cebula T.A."/>
        </authorList>
    </citation>
    <scope>NUCLEOTIDE SEQUENCE [LARGE SCALE GENOMIC DNA]</scope>
    <source>
        <strain>CT_02021853</strain>
    </source>
</reference>
<sequence>MPKYRSATTTHGRNMAGARALWRATGMTDSDFGKPIIAVVNSFTQFVPGHVHLRDLGKLVAEQIEASGGVAKEFNTIAVDDGIAMGHGGMLYSLPSRELIADSVEYMVNAHCADAMVCISNCDKITPGMLMASLRLNIPVIFVSGGPMEAGKTKLSDKIIKLDLVDAMIQGADPKVSDDQSNQVERSACPTCGSCSGMFTANSMNCLTEALGLSQPGNGSLLATHADRKQLFLNAGKRIVELTKRYYEQNDESALPRNIASKAAFENAMTLDIAMGGSTNTVLHLLAAAQEAEIDFTMSDIDKLSRKVPQLCKVAPSTQKYHMEDVHRAGGVLGILGELDRAGLLNCNVKNVLGLTLPQTLEQYDITVTQDEAVKKMFRAGPAGIRTTQAFSQDCRWDSLDDDRAAGCIRSLEYAYSKDGGLAVLYGNFAENGCIVKTAGVDDSILKFTGPAKVYESQDDAVEAILGGKVVEGDVVVIRYEGPKGGPGMQEMLYPTSFLKSMGLGKACALITDGRFSGGTSGLSIGHVSPEAASGGTIALIEDGDTIAIDIPNRSIQLQLNEAEIAARREAQEARGDKAWTPKNRQRQVSFALRAYASLATSADKGAVRDKSKLGG</sequence>
<accession>B5FN65</accession>
<proteinExistence type="inferred from homology"/>
<organism>
    <name type="scientific">Salmonella dublin (strain CT_02021853)</name>
    <dbReference type="NCBI Taxonomy" id="439851"/>
    <lineage>
        <taxon>Bacteria</taxon>
        <taxon>Pseudomonadati</taxon>
        <taxon>Pseudomonadota</taxon>
        <taxon>Gammaproteobacteria</taxon>
        <taxon>Enterobacterales</taxon>
        <taxon>Enterobacteriaceae</taxon>
        <taxon>Salmonella</taxon>
    </lineage>
</organism>
<feature type="chain" id="PRO_1000089406" description="Dihydroxy-acid dehydratase">
    <location>
        <begin position="1"/>
        <end position="616"/>
    </location>
</feature>
<feature type="active site" description="Proton acceptor" evidence="1">
    <location>
        <position position="517"/>
    </location>
</feature>
<feature type="binding site" evidence="1">
    <location>
        <position position="81"/>
    </location>
    <ligand>
        <name>Mg(2+)</name>
        <dbReference type="ChEBI" id="CHEBI:18420"/>
    </ligand>
</feature>
<feature type="binding site" evidence="1">
    <location>
        <position position="122"/>
    </location>
    <ligand>
        <name>[2Fe-2S] cluster</name>
        <dbReference type="ChEBI" id="CHEBI:190135"/>
    </ligand>
</feature>
<feature type="binding site" evidence="1">
    <location>
        <position position="123"/>
    </location>
    <ligand>
        <name>Mg(2+)</name>
        <dbReference type="ChEBI" id="CHEBI:18420"/>
    </ligand>
</feature>
<feature type="binding site" description="via carbamate group" evidence="1">
    <location>
        <position position="124"/>
    </location>
    <ligand>
        <name>Mg(2+)</name>
        <dbReference type="ChEBI" id="CHEBI:18420"/>
    </ligand>
</feature>
<feature type="binding site" evidence="1">
    <location>
        <position position="195"/>
    </location>
    <ligand>
        <name>[2Fe-2S] cluster</name>
        <dbReference type="ChEBI" id="CHEBI:190135"/>
    </ligand>
</feature>
<feature type="binding site" evidence="1">
    <location>
        <position position="491"/>
    </location>
    <ligand>
        <name>Mg(2+)</name>
        <dbReference type="ChEBI" id="CHEBI:18420"/>
    </ligand>
</feature>
<feature type="modified residue" description="N6-carboxylysine" evidence="1">
    <location>
        <position position="124"/>
    </location>
</feature>